<feature type="chain" id="PRO_0000123583" description="Isoprenyl transferase">
    <location>
        <begin position="1"/>
        <end position="254"/>
    </location>
</feature>
<feature type="active site" evidence="1">
    <location>
        <position position="12"/>
    </location>
</feature>
<feature type="active site" description="Proton acceptor" evidence="1">
    <location>
        <position position="60"/>
    </location>
</feature>
<feature type="binding site" evidence="1">
    <location>
        <position position="12"/>
    </location>
    <ligand>
        <name>Mg(2+)</name>
        <dbReference type="ChEBI" id="CHEBI:18420"/>
    </ligand>
</feature>
<feature type="binding site" evidence="1">
    <location>
        <begin position="13"/>
        <end position="16"/>
    </location>
    <ligand>
        <name>substrate</name>
    </ligand>
</feature>
<feature type="binding site" evidence="1">
    <location>
        <position position="17"/>
    </location>
    <ligand>
        <name>substrate</name>
    </ligand>
</feature>
<feature type="binding site" evidence="1">
    <location>
        <position position="25"/>
    </location>
    <ligand>
        <name>substrate</name>
    </ligand>
</feature>
<feature type="binding site" evidence="1">
    <location>
        <position position="29"/>
    </location>
    <ligand>
        <name>substrate</name>
    </ligand>
</feature>
<feature type="binding site" evidence="1">
    <location>
        <begin position="57"/>
        <end position="59"/>
    </location>
    <ligand>
        <name>substrate</name>
    </ligand>
</feature>
<feature type="binding site" evidence="1">
    <location>
        <position position="61"/>
    </location>
    <ligand>
        <name>substrate</name>
    </ligand>
</feature>
<feature type="binding site" evidence="1">
    <location>
        <position position="63"/>
    </location>
    <ligand>
        <name>substrate</name>
    </ligand>
</feature>
<feature type="binding site" evidence="1">
    <location>
        <position position="180"/>
    </location>
    <ligand>
        <name>substrate</name>
    </ligand>
</feature>
<feature type="binding site" evidence="1">
    <location>
        <begin position="186"/>
        <end position="188"/>
    </location>
    <ligand>
        <name>substrate</name>
    </ligand>
</feature>
<feature type="binding site" evidence="1">
    <location>
        <position position="199"/>
    </location>
    <ligand>
        <name>Mg(2+)</name>
        <dbReference type="ChEBI" id="CHEBI:18420"/>
    </ligand>
</feature>
<sequence length="254" mass="28036">MSDPRHIAIIMDGNGRWAKARGLPRSAGHRAGVEALREIVRAAGDRGLGYLTLFAFSSENWTRPSGEVSDLLGLLKLFIRRDLAELHRNNVRVNIIGERAELAADIRALLNEAESLTHRNTGLNLVIAFNYGSRDEIVRAVRSLARDVAAGLLDPSSISAELVSANLDTAGIPDPDLIIRTSGEMRLSNFLLWQAAYSEFLFLPCHWPDFRPTDLDAAYETFRQRERRFGGVEPRASADAEEEILCPSTKGAAV</sequence>
<evidence type="ECO:0000255" key="1">
    <source>
        <dbReference type="HAMAP-Rule" id="MF_01139"/>
    </source>
</evidence>
<protein>
    <recommendedName>
        <fullName evidence="1">Isoprenyl transferase</fullName>
        <ecNumber evidence="1">2.5.1.-</ecNumber>
    </recommendedName>
</protein>
<reference key="1">
    <citation type="journal article" date="2002" name="Proc. Natl. Acad. Sci. U.S.A.">
        <title>The Brucella suis genome reveals fundamental similarities between animal and plant pathogens and symbionts.</title>
        <authorList>
            <person name="Paulsen I.T."/>
            <person name="Seshadri R."/>
            <person name="Nelson K.E."/>
            <person name="Eisen J.A."/>
            <person name="Heidelberg J.F."/>
            <person name="Read T.D."/>
            <person name="Dodson R.J."/>
            <person name="Umayam L.A."/>
            <person name="Brinkac L.M."/>
            <person name="Beanan M.J."/>
            <person name="Daugherty S.C."/>
            <person name="DeBoy R.T."/>
            <person name="Durkin A.S."/>
            <person name="Kolonay J.F."/>
            <person name="Madupu R."/>
            <person name="Nelson W.C."/>
            <person name="Ayodeji B."/>
            <person name="Kraul M."/>
            <person name="Shetty J."/>
            <person name="Malek J.A."/>
            <person name="Van Aken S.E."/>
            <person name="Riedmuller S."/>
            <person name="Tettelin H."/>
            <person name="Gill S.R."/>
            <person name="White O."/>
            <person name="Salzberg S.L."/>
            <person name="Hoover D.L."/>
            <person name="Lindler L.E."/>
            <person name="Halling S.M."/>
            <person name="Boyle S.M."/>
            <person name="Fraser C.M."/>
        </authorList>
    </citation>
    <scope>NUCLEOTIDE SEQUENCE [LARGE SCALE GENOMIC DNA]</scope>
    <source>
        <strain>1330</strain>
    </source>
</reference>
<reference key="2">
    <citation type="journal article" date="2011" name="J. Bacteriol.">
        <title>Revised genome sequence of Brucella suis 1330.</title>
        <authorList>
            <person name="Tae H."/>
            <person name="Shallom S."/>
            <person name="Settlage R."/>
            <person name="Preston D."/>
            <person name="Adams L.G."/>
            <person name="Garner H.R."/>
        </authorList>
    </citation>
    <scope>NUCLEOTIDE SEQUENCE [LARGE SCALE GENOMIC DNA]</scope>
    <source>
        <strain>1330</strain>
    </source>
</reference>
<organism>
    <name type="scientific">Brucella suis biovar 1 (strain 1330)</name>
    <dbReference type="NCBI Taxonomy" id="204722"/>
    <lineage>
        <taxon>Bacteria</taxon>
        <taxon>Pseudomonadati</taxon>
        <taxon>Pseudomonadota</taxon>
        <taxon>Alphaproteobacteria</taxon>
        <taxon>Hyphomicrobiales</taxon>
        <taxon>Brucellaceae</taxon>
        <taxon>Brucella/Ochrobactrum group</taxon>
        <taxon>Brucella</taxon>
    </lineage>
</organism>
<keyword id="KW-0460">Magnesium</keyword>
<keyword id="KW-0479">Metal-binding</keyword>
<keyword id="KW-0808">Transferase</keyword>
<name>ISPT_BRUSU</name>
<dbReference type="EC" id="2.5.1.-" evidence="1"/>
<dbReference type="EMBL" id="AE014291">
    <property type="protein sequence ID" value="AAN30078.1"/>
    <property type="molecule type" value="Genomic_DNA"/>
</dbReference>
<dbReference type="EMBL" id="CP002997">
    <property type="protein sequence ID" value="AEM18496.1"/>
    <property type="molecule type" value="Genomic_DNA"/>
</dbReference>
<dbReference type="RefSeq" id="WP_004690895.1">
    <property type="nucleotide sequence ID" value="NZ_KN046804.1"/>
</dbReference>
<dbReference type="SMR" id="Q8G0D9"/>
<dbReference type="KEGG" id="bms:BR1158"/>
<dbReference type="KEGG" id="bsi:BS1330_I1154"/>
<dbReference type="PATRIC" id="fig|204722.21.peg.1958"/>
<dbReference type="HOGENOM" id="CLU_038505_1_1_5"/>
<dbReference type="PhylomeDB" id="Q8G0D9"/>
<dbReference type="PRO" id="PR:Q8G0D9"/>
<dbReference type="Proteomes" id="UP000007104">
    <property type="component" value="Chromosome I"/>
</dbReference>
<dbReference type="GO" id="GO:0005829">
    <property type="term" value="C:cytosol"/>
    <property type="evidence" value="ECO:0007669"/>
    <property type="project" value="TreeGrafter"/>
</dbReference>
<dbReference type="GO" id="GO:0008834">
    <property type="term" value="F:ditrans,polycis-undecaprenyl-diphosphate synthase [(2E,6E)-farnesyl-diphosphate specific] activity"/>
    <property type="evidence" value="ECO:0007669"/>
    <property type="project" value="TreeGrafter"/>
</dbReference>
<dbReference type="GO" id="GO:0000287">
    <property type="term" value="F:magnesium ion binding"/>
    <property type="evidence" value="ECO:0007669"/>
    <property type="project" value="UniProtKB-UniRule"/>
</dbReference>
<dbReference type="GO" id="GO:0016094">
    <property type="term" value="P:polyprenol biosynthetic process"/>
    <property type="evidence" value="ECO:0007669"/>
    <property type="project" value="TreeGrafter"/>
</dbReference>
<dbReference type="CDD" id="cd00475">
    <property type="entry name" value="Cis_IPPS"/>
    <property type="match status" value="1"/>
</dbReference>
<dbReference type="FunFam" id="3.40.1180.10:FF:000001">
    <property type="entry name" value="(2E,6E)-farnesyl-diphosphate-specific ditrans,polycis-undecaprenyl-diphosphate synthase"/>
    <property type="match status" value="1"/>
</dbReference>
<dbReference type="Gene3D" id="3.40.1180.10">
    <property type="entry name" value="Decaprenyl diphosphate synthase-like"/>
    <property type="match status" value="1"/>
</dbReference>
<dbReference type="HAMAP" id="MF_01139">
    <property type="entry name" value="ISPT"/>
    <property type="match status" value="1"/>
</dbReference>
<dbReference type="InterPro" id="IPR001441">
    <property type="entry name" value="UPP_synth-like"/>
</dbReference>
<dbReference type="InterPro" id="IPR018520">
    <property type="entry name" value="UPP_synth-like_CS"/>
</dbReference>
<dbReference type="InterPro" id="IPR036424">
    <property type="entry name" value="UPP_synth-like_sf"/>
</dbReference>
<dbReference type="NCBIfam" id="NF011405">
    <property type="entry name" value="PRK14830.1"/>
    <property type="match status" value="1"/>
</dbReference>
<dbReference type="NCBIfam" id="NF011408">
    <property type="entry name" value="PRK14834.1"/>
    <property type="match status" value="1"/>
</dbReference>
<dbReference type="NCBIfam" id="TIGR00055">
    <property type="entry name" value="uppS"/>
    <property type="match status" value="1"/>
</dbReference>
<dbReference type="PANTHER" id="PTHR10291:SF0">
    <property type="entry name" value="DEHYDRODOLICHYL DIPHOSPHATE SYNTHASE 2"/>
    <property type="match status" value="1"/>
</dbReference>
<dbReference type="PANTHER" id="PTHR10291">
    <property type="entry name" value="DEHYDRODOLICHYL DIPHOSPHATE SYNTHASE FAMILY MEMBER"/>
    <property type="match status" value="1"/>
</dbReference>
<dbReference type="Pfam" id="PF01255">
    <property type="entry name" value="Prenyltransf"/>
    <property type="match status" value="1"/>
</dbReference>
<dbReference type="SUPFAM" id="SSF64005">
    <property type="entry name" value="Undecaprenyl diphosphate synthase"/>
    <property type="match status" value="1"/>
</dbReference>
<dbReference type="PROSITE" id="PS01066">
    <property type="entry name" value="UPP_SYNTHASE"/>
    <property type="match status" value="1"/>
</dbReference>
<comment type="function">
    <text evidence="1">Catalyzes the condensation of isopentenyl diphosphate (IPP) with allylic pyrophosphates generating different type of terpenoids.</text>
</comment>
<comment type="cofactor">
    <cofactor evidence="1">
        <name>Mg(2+)</name>
        <dbReference type="ChEBI" id="CHEBI:18420"/>
    </cofactor>
    <text evidence="1">Binds 2 magnesium ions per subunit.</text>
</comment>
<comment type="subunit">
    <text evidence="1">Homodimer.</text>
</comment>
<comment type="similarity">
    <text evidence="1">Belongs to the UPP synthase family.</text>
</comment>
<proteinExistence type="inferred from homology"/>
<gene>
    <name evidence="1" type="primary">uppS</name>
    <name type="ordered locus">BR1158</name>
    <name type="ordered locus">BS1330_I1154</name>
</gene>
<accession>Q8G0D9</accession>
<accession>G0KA80</accession>